<comment type="subcellular location">
    <subcellularLocation>
        <location evidence="2">Cell membrane</location>
        <topology evidence="2">Multi-pass membrane protein</topology>
    </subcellularLocation>
</comment>
<comment type="similarity">
    <text evidence="2">Belongs to the bacteriophage holin family. Cp-1 holin subfamily.</text>
</comment>
<keyword id="KW-1003">Cell membrane</keyword>
<keyword id="KW-0472">Membrane</keyword>
<keyword id="KW-1185">Reference proteome</keyword>
<keyword id="KW-0812">Transmembrane</keyword>
<keyword id="KW-1133">Transmembrane helix</keyword>
<evidence type="ECO:0000255" key="1"/>
<evidence type="ECO:0000305" key="2"/>
<sequence>MEETSLFINFETLDLARVYLFGGVKYLDLLLVLSIIDVLTGVIKAWKFKKLRSRSAWFGYVRKLLNFFAVILANVIDTVLNLNGVLTFGTVLFYIANEGLSITENLAQIGVKIPSSITDRLQTIENEKEQSKNNADKAAG</sequence>
<protein>
    <recommendedName>
        <fullName>Uncharacterized protein YqxH</fullName>
    </recommendedName>
    <alternativeName>
        <fullName>ORF2</fullName>
    </alternativeName>
</protein>
<reference key="1">
    <citation type="journal article" date="1991" name="J. Gen. Microbiol.">
        <title>Cloning, expression, sequence analysis and biochemical characterization of an autolytic amidase of Bacillus subtilis 168 trpC2.</title>
        <authorList>
            <person name="Foster S.J."/>
        </authorList>
    </citation>
    <scope>NUCLEOTIDE SEQUENCE [GENOMIC DNA]</scope>
    <source>
        <strain>168</strain>
    </source>
</reference>
<reference key="2">
    <citation type="journal article" date="1995" name="Microbiology">
        <title>Complete nucleotide sequence of a skin element excised by DNA rearrangement during sporulation in Bacillus subtilis.</title>
        <authorList>
            <person name="Takemaru K."/>
            <person name="Mizuno M."/>
            <person name="Sato T."/>
            <person name="Takeuchi M."/>
            <person name="Kobayashi Y."/>
        </authorList>
    </citation>
    <scope>NUCLEOTIDE SEQUENCE [GENOMIC DNA]</scope>
    <source>
        <strain>168 / JH642</strain>
    </source>
</reference>
<reference key="3">
    <citation type="journal article" date="1996" name="Microbiology">
        <title>Systematic sequencing of the 283 kb 210 degrees-232 degrees region of the Bacillus subtilis genome containing the skin element and many sporulation genes.</title>
        <authorList>
            <person name="Mizuno M."/>
            <person name="Masuda S."/>
            <person name="Takemaru K."/>
            <person name="Hosono S."/>
            <person name="Sato T."/>
            <person name="Takeuchi M."/>
            <person name="Kobayashi Y."/>
        </authorList>
    </citation>
    <scope>NUCLEOTIDE SEQUENCE [GENOMIC DNA]</scope>
    <source>
        <strain>168 / JH642</strain>
    </source>
</reference>
<reference key="4">
    <citation type="journal article" date="1997" name="Nature">
        <title>The complete genome sequence of the Gram-positive bacterium Bacillus subtilis.</title>
        <authorList>
            <person name="Kunst F."/>
            <person name="Ogasawara N."/>
            <person name="Moszer I."/>
            <person name="Albertini A.M."/>
            <person name="Alloni G."/>
            <person name="Azevedo V."/>
            <person name="Bertero M.G."/>
            <person name="Bessieres P."/>
            <person name="Bolotin A."/>
            <person name="Borchert S."/>
            <person name="Borriss R."/>
            <person name="Boursier L."/>
            <person name="Brans A."/>
            <person name="Braun M."/>
            <person name="Brignell S.C."/>
            <person name="Bron S."/>
            <person name="Brouillet S."/>
            <person name="Bruschi C.V."/>
            <person name="Caldwell B."/>
            <person name="Capuano V."/>
            <person name="Carter N.M."/>
            <person name="Choi S.-K."/>
            <person name="Codani J.-J."/>
            <person name="Connerton I.F."/>
            <person name="Cummings N.J."/>
            <person name="Daniel R.A."/>
            <person name="Denizot F."/>
            <person name="Devine K.M."/>
            <person name="Duesterhoeft A."/>
            <person name="Ehrlich S.D."/>
            <person name="Emmerson P.T."/>
            <person name="Entian K.-D."/>
            <person name="Errington J."/>
            <person name="Fabret C."/>
            <person name="Ferrari E."/>
            <person name="Foulger D."/>
            <person name="Fritz C."/>
            <person name="Fujita M."/>
            <person name="Fujita Y."/>
            <person name="Fuma S."/>
            <person name="Galizzi A."/>
            <person name="Galleron N."/>
            <person name="Ghim S.-Y."/>
            <person name="Glaser P."/>
            <person name="Goffeau A."/>
            <person name="Golightly E.J."/>
            <person name="Grandi G."/>
            <person name="Guiseppi G."/>
            <person name="Guy B.J."/>
            <person name="Haga K."/>
            <person name="Haiech J."/>
            <person name="Harwood C.R."/>
            <person name="Henaut A."/>
            <person name="Hilbert H."/>
            <person name="Holsappel S."/>
            <person name="Hosono S."/>
            <person name="Hullo M.-F."/>
            <person name="Itaya M."/>
            <person name="Jones L.-M."/>
            <person name="Joris B."/>
            <person name="Karamata D."/>
            <person name="Kasahara Y."/>
            <person name="Klaerr-Blanchard M."/>
            <person name="Klein C."/>
            <person name="Kobayashi Y."/>
            <person name="Koetter P."/>
            <person name="Koningstein G."/>
            <person name="Krogh S."/>
            <person name="Kumano M."/>
            <person name="Kurita K."/>
            <person name="Lapidus A."/>
            <person name="Lardinois S."/>
            <person name="Lauber J."/>
            <person name="Lazarevic V."/>
            <person name="Lee S.-M."/>
            <person name="Levine A."/>
            <person name="Liu H."/>
            <person name="Masuda S."/>
            <person name="Mauel C."/>
            <person name="Medigue C."/>
            <person name="Medina N."/>
            <person name="Mellado R.P."/>
            <person name="Mizuno M."/>
            <person name="Moestl D."/>
            <person name="Nakai S."/>
            <person name="Noback M."/>
            <person name="Noone D."/>
            <person name="O'Reilly M."/>
            <person name="Ogawa K."/>
            <person name="Ogiwara A."/>
            <person name="Oudega B."/>
            <person name="Park S.-H."/>
            <person name="Parro V."/>
            <person name="Pohl T.M."/>
            <person name="Portetelle D."/>
            <person name="Porwollik S."/>
            <person name="Prescott A.M."/>
            <person name="Presecan E."/>
            <person name="Pujic P."/>
            <person name="Purnelle B."/>
            <person name="Rapoport G."/>
            <person name="Rey M."/>
            <person name="Reynolds S."/>
            <person name="Rieger M."/>
            <person name="Rivolta C."/>
            <person name="Rocha E."/>
            <person name="Roche B."/>
            <person name="Rose M."/>
            <person name="Sadaie Y."/>
            <person name="Sato T."/>
            <person name="Scanlan E."/>
            <person name="Schleich S."/>
            <person name="Schroeter R."/>
            <person name="Scoffone F."/>
            <person name="Sekiguchi J."/>
            <person name="Sekowska A."/>
            <person name="Seror S.J."/>
            <person name="Serror P."/>
            <person name="Shin B.-S."/>
            <person name="Soldo B."/>
            <person name="Sorokin A."/>
            <person name="Tacconi E."/>
            <person name="Takagi T."/>
            <person name="Takahashi H."/>
            <person name="Takemaru K."/>
            <person name="Takeuchi M."/>
            <person name="Tamakoshi A."/>
            <person name="Tanaka T."/>
            <person name="Terpstra P."/>
            <person name="Tognoni A."/>
            <person name="Tosato V."/>
            <person name="Uchiyama S."/>
            <person name="Vandenbol M."/>
            <person name="Vannier F."/>
            <person name="Vassarotti A."/>
            <person name="Viari A."/>
            <person name="Wambutt R."/>
            <person name="Wedler E."/>
            <person name="Wedler H."/>
            <person name="Weitzenegger T."/>
            <person name="Winters P."/>
            <person name="Wipat A."/>
            <person name="Yamamoto H."/>
            <person name="Yamane K."/>
            <person name="Yasumoto K."/>
            <person name="Yata K."/>
            <person name="Yoshida K."/>
            <person name="Yoshikawa H.-F."/>
            <person name="Zumstein E."/>
            <person name="Yoshikawa H."/>
            <person name="Danchin A."/>
        </authorList>
    </citation>
    <scope>NUCLEOTIDE SEQUENCE [LARGE SCALE GENOMIC DNA]</scope>
    <source>
        <strain>168</strain>
    </source>
</reference>
<proteinExistence type="inferred from homology"/>
<gene>
    <name type="primary">yqxH</name>
    <name type="synonym">yqdD</name>
    <name type="ordered locus">BSU25910</name>
</gene>
<accession>P24811</accession>
<dbReference type="EMBL" id="M59232">
    <property type="protein sequence ID" value="AAA62675.1"/>
    <property type="molecule type" value="Genomic_DNA"/>
</dbReference>
<dbReference type="EMBL" id="D32216">
    <property type="protein sequence ID" value="BAA06959.1"/>
    <property type="molecule type" value="Genomic_DNA"/>
</dbReference>
<dbReference type="EMBL" id="D84432">
    <property type="protein sequence ID" value="BAA12423.1"/>
    <property type="molecule type" value="Genomic_DNA"/>
</dbReference>
<dbReference type="EMBL" id="AL009126">
    <property type="protein sequence ID" value="CAB14532.1"/>
    <property type="molecule type" value="Genomic_DNA"/>
</dbReference>
<dbReference type="PIR" id="B44816">
    <property type="entry name" value="B44816"/>
</dbReference>
<dbReference type="RefSeq" id="NP_390468.1">
    <property type="nucleotide sequence ID" value="NC_000964.3"/>
</dbReference>
<dbReference type="RefSeq" id="WP_003246208.1">
    <property type="nucleotide sequence ID" value="NZ_OZ025638.1"/>
</dbReference>
<dbReference type="SMR" id="P24811"/>
<dbReference type="FunCoup" id="P24811">
    <property type="interactions" value="8"/>
</dbReference>
<dbReference type="STRING" id="224308.BSU25910"/>
<dbReference type="PaxDb" id="224308-BSU25910"/>
<dbReference type="EnsemblBacteria" id="CAB14532">
    <property type="protein sequence ID" value="CAB14532"/>
    <property type="gene ID" value="BSU_25910"/>
</dbReference>
<dbReference type="GeneID" id="937782"/>
<dbReference type="KEGG" id="bsu:BSU25910"/>
<dbReference type="PATRIC" id="fig|224308.179.peg.2816"/>
<dbReference type="eggNOG" id="COG4824">
    <property type="taxonomic scope" value="Bacteria"/>
</dbReference>
<dbReference type="InParanoid" id="P24811"/>
<dbReference type="OrthoDB" id="88184at2"/>
<dbReference type="PhylomeDB" id="P24811"/>
<dbReference type="BioCyc" id="BSUB:BSU25910-MONOMER"/>
<dbReference type="Proteomes" id="UP000001570">
    <property type="component" value="Chromosome"/>
</dbReference>
<dbReference type="GO" id="GO:0005886">
    <property type="term" value="C:plasma membrane"/>
    <property type="evidence" value="ECO:0007669"/>
    <property type="project" value="UniProtKB-SubCell"/>
</dbReference>
<dbReference type="InterPro" id="IPR006480">
    <property type="entry name" value="Phage_holin_4_1"/>
</dbReference>
<dbReference type="NCBIfam" id="TIGR01593">
    <property type="entry name" value="holin_tox_secr"/>
    <property type="match status" value="1"/>
</dbReference>
<dbReference type="Pfam" id="PF05105">
    <property type="entry name" value="Phage_holin_4_1"/>
    <property type="match status" value="1"/>
</dbReference>
<organism>
    <name type="scientific">Bacillus subtilis (strain 168)</name>
    <dbReference type="NCBI Taxonomy" id="224308"/>
    <lineage>
        <taxon>Bacteria</taxon>
        <taxon>Bacillati</taxon>
        <taxon>Bacillota</taxon>
        <taxon>Bacilli</taxon>
        <taxon>Bacillales</taxon>
        <taxon>Bacillaceae</taxon>
        <taxon>Bacillus</taxon>
    </lineage>
</organism>
<name>YQXH_BACSU</name>
<feature type="chain" id="PRO_0000172860" description="Uncharacterized protein YqxH">
    <location>
        <begin position="1"/>
        <end position="140"/>
    </location>
</feature>
<feature type="transmembrane region" description="Helical" evidence="1">
    <location>
        <begin position="26"/>
        <end position="43"/>
    </location>
</feature>
<feature type="transmembrane region" description="Helical" evidence="1">
    <location>
        <begin position="64"/>
        <end position="86"/>
    </location>
</feature>